<dbReference type="EC" id="3.1.11.6" evidence="1"/>
<dbReference type="EMBL" id="AE000511">
    <property type="protein sequence ID" value="AAD08532.1"/>
    <property type="molecule type" value="Genomic_DNA"/>
</dbReference>
<dbReference type="PIR" id="B64705">
    <property type="entry name" value="B64705"/>
</dbReference>
<dbReference type="RefSeq" id="NP_208273.1">
    <property type="nucleotide sequence ID" value="NC_000915.1"/>
</dbReference>
<dbReference type="RefSeq" id="WP_001150347.1">
    <property type="nucleotide sequence ID" value="NC_018939.1"/>
</dbReference>
<dbReference type="SMR" id="O26016"/>
<dbReference type="DIP" id="DIP-3744N"/>
<dbReference type="IntAct" id="O26016">
    <property type="interactions" value="19"/>
</dbReference>
<dbReference type="MINT" id="O26016"/>
<dbReference type="STRING" id="85962.HP_1482"/>
<dbReference type="PaxDb" id="85962-C694_07675"/>
<dbReference type="EnsemblBacteria" id="AAD08532">
    <property type="protein sequence ID" value="AAD08532"/>
    <property type="gene ID" value="HP_1482"/>
</dbReference>
<dbReference type="KEGG" id="heo:C694_07675"/>
<dbReference type="KEGG" id="hpy:HP_1482"/>
<dbReference type="PATRIC" id="fig|85962.47.peg.1593"/>
<dbReference type="eggNOG" id="COG1722">
    <property type="taxonomic scope" value="Bacteria"/>
</dbReference>
<dbReference type="InParanoid" id="O26016"/>
<dbReference type="OrthoDB" id="5328361at2"/>
<dbReference type="Proteomes" id="UP000000429">
    <property type="component" value="Chromosome"/>
</dbReference>
<dbReference type="GO" id="GO:0005737">
    <property type="term" value="C:cytoplasm"/>
    <property type="evidence" value="ECO:0007669"/>
    <property type="project" value="UniProtKB-SubCell"/>
</dbReference>
<dbReference type="GO" id="GO:0009318">
    <property type="term" value="C:exodeoxyribonuclease VII complex"/>
    <property type="evidence" value="ECO:0007669"/>
    <property type="project" value="InterPro"/>
</dbReference>
<dbReference type="GO" id="GO:0008855">
    <property type="term" value="F:exodeoxyribonuclease VII activity"/>
    <property type="evidence" value="ECO:0007669"/>
    <property type="project" value="UniProtKB-UniRule"/>
</dbReference>
<dbReference type="GO" id="GO:0006308">
    <property type="term" value="P:DNA catabolic process"/>
    <property type="evidence" value="ECO:0007669"/>
    <property type="project" value="UniProtKB-UniRule"/>
</dbReference>
<dbReference type="Gene3D" id="1.10.287.1040">
    <property type="entry name" value="Exonuclease VII, small subunit"/>
    <property type="match status" value="1"/>
</dbReference>
<dbReference type="HAMAP" id="MF_00337">
    <property type="entry name" value="Exonuc_7_S"/>
    <property type="match status" value="1"/>
</dbReference>
<dbReference type="InterPro" id="IPR003761">
    <property type="entry name" value="Exonuc_VII_S"/>
</dbReference>
<dbReference type="InterPro" id="IPR037004">
    <property type="entry name" value="Exonuc_VII_ssu_sf"/>
</dbReference>
<dbReference type="NCBIfam" id="NF010668">
    <property type="entry name" value="PRK14065.1"/>
    <property type="match status" value="1"/>
</dbReference>
<dbReference type="NCBIfam" id="TIGR01280">
    <property type="entry name" value="xseB"/>
    <property type="match status" value="1"/>
</dbReference>
<dbReference type="Pfam" id="PF02609">
    <property type="entry name" value="Exonuc_VII_S"/>
    <property type="match status" value="1"/>
</dbReference>
<dbReference type="SUPFAM" id="SSF116842">
    <property type="entry name" value="XseB-like"/>
    <property type="match status" value="1"/>
</dbReference>
<protein>
    <recommendedName>
        <fullName evidence="1">Exodeoxyribonuclease 7 small subunit</fullName>
        <ecNumber evidence="1">3.1.11.6</ecNumber>
    </recommendedName>
    <alternativeName>
        <fullName evidence="1">Exodeoxyribonuclease VII small subunit</fullName>
        <shortName evidence="1">Exonuclease VII small subunit</shortName>
    </alternativeName>
</protein>
<comment type="function">
    <text evidence="1">Bidirectionally degrades single-stranded DNA into large acid-insoluble oligonucleotides, which are then degraded further into small acid-soluble oligonucleotides.</text>
</comment>
<comment type="catalytic activity">
    <reaction evidence="1">
        <text>Exonucleolytic cleavage in either 5'- to 3'- or 3'- to 5'-direction to yield nucleoside 5'-phosphates.</text>
        <dbReference type="EC" id="3.1.11.6"/>
    </reaction>
</comment>
<comment type="subunit">
    <text evidence="1">Heterooligomer composed of large and small subunits.</text>
</comment>
<comment type="subcellular location">
    <subcellularLocation>
        <location evidence="1">Cytoplasm</location>
    </subcellularLocation>
</comment>
<comment type="similarity">
    <text evidence="1 3">Belongs to the XseB family.</text>
</comment>
<keyword id="KW-0963">Cytoplasm</keyword>
<keyword id="KW-0269">Exonuclease</keyword>
<keyword id="KW-0378">Hydrolase</keyword>
<keyword id="KW-0540">Nuclease</keyword>
<keyword id="KW-1185">Reference proteome</keyword>
<accession>O26016</accession>
<reference key="1">
    <citation type="journal article" date="1997" name="Nature">
        <title>The complete genome sequence of the gastric pathogen Helicobacter pylori.</title>
        <authorList>
            <person name="Tomb J.-F."/>
            <person name="White O."/>
            <person name="Kerlavage A.R."/>
            <person name="Clayton R.A."/>
            <person name="Sutton G.G."/>
            <person name="Fleischmann R.D."/>
            <person name="Ketchum K.A."/>
            <person name="Klenk H.-P."/>
            <person name="Gill S.R."/>
            <person name="Dougherty B.A."/>
            <person name="Nelson K.E."/>
            <person name="Quackenbush J."/>
            <person name="Zhou L."/>
            <person name="Kirkness E.F."/>
            <person name="Peterson S.N."/>
            <person name="Loftus B.J."/>
            <person name="Richardson D.L."/>
            <person name="Dodson R.J."/>
            <person name="Khalak H.G."/>
            <person name="Glodek A."/>
            <person name="McKenney K."/>
            <person name="FitzGerald L.M."/>
            <person name="Lee N."/>
            <person name="Adams M.D."/>
            <person name="Hickey E.K."/>
            <person name="Berg D.E."/>
            <person name="Gocayne J.D."/>
            <person name="Utterback T.R."/>
            <person name="Peterson J.D."/>
            <person name="Kelley J.M."/>
            <person name="Cotton M.D."/>
            <person name="Weidman J.F."/>
            <person name="Fujii C."/>
            <person name="Bowman C."/>
            <person name="Watthey L."/>
            <person name="Wallin E."/>
            <person name="Hayes W.S."/>
            <person name="Borodovsky M."/>
            <person name="Karp P.D."/>
            <person name="Smith H.O."/>
            <person name="Fraser C.M."/>
            <person name="Venter J.C."/>
        </authorList>
    </citation>
    <scope>NUCLEOTIDE SEQUENCE [LARGE SCALE GENOMIC DNA]</scope>
    <source>
        <strain>ATCC 700392 / 26695</strain>
    </source>
</reference>
<evidence type="ECO:0000255" key="1">
    <source>
        <dbReference type="HAMAP-Rule" id="MF_00337"/>
    </source>
</evidence>
<evidence type="ECO:0000256" key="2">
    <source>
        <dbReference type="SAM" id="MobiDB-lite"/>
    </source>
</evidence>
<evidence type="ECO:0000305" key="3"/>
<gene>
    <name evidence="1" type="primary">xseB</name>
    <name type="ordered locus">HP_1482</name>
</gene>
<feature type="chain" id="PRO_0000206954" description="Exodeoxyribonuclease 7 small subunit">
    <location>
        <begin position="1"/>
        <end position="86"/>
    </location>
</feature>
<feature type="region of interest" description="Disordered" evidence="2">
    <location>
        <begin position="1"/>
        <end position="26"/>
    </location>
</feature>
<name>EX7S_HELPY</name>
<proteinExistence type="inferred from homology"/>
<sequence length="86" mass="10039">MQDELFETEKIPPKNTKNTKNAPKKSFEEHVHSLERAIDRLNDPNLSLKDGMDLYKTAMQELFLAQKLLENAYLEHEKLQTPDQKA</sequence>
<organism>
    <name type="scientific">Helicobacter pylori (strain ATCC 700392 / 26695)</name>
    <name type="common">Campylobacter pylori</name>
    <dbReference type="NCBI Taxonomy" id="85962"/>
    <lineage>
        <taxon>Bacteria</taxon>
        <taxon>Pseudomonadati</taxon>
        <taxon>Campylobacterota</taxon>
        <taxon>Epsilonproteobacteria</taxon>
        <taxon>Campylobacterales</taxon>
        <taxon>Helicobacteraceae</taxon>
        <taxon>Helicobacter</taxon>
    </lineage>
</organism>